<evidence type="ECO:0000255" key="1"/>
<evidence type="ECO:0000269" key="2">
    <source>
    </source>
</evidence>
<evidence type="ECO:0000305" key="3"/>
<name>PYF3_PENMO</name>
<keyword id="KW-0027">Amidation</keyword>
<keyword id="KW-0903">Direct protein sequencing</keyword>
<keyword id="KW-0527">Neuropeptide</keyword>
<keyword id="KW-0964">Secreted</keyword>
<proteinExistence type="evidence at protein level"/>
<accession>P84007</accession>
<protein>
    <recommendedName>
        <fullName>Peptide tyrosine phenylalanine 3</fullName>
    </recommendedName>
    <alternativeName>
        <fullName>Pem-PYF3</fullName>
    </alternativeName>
</protein>
<organism>
    <name type="scientific">Penaeus monodon</name>
    <name type="common">Giant tiger prawn</name>
    <dbReference type="NCBI Taxonomy" id="6687"/>
    <lineage>
        <taxon>Eukaryota</taxon>
        <taxon>Metazoa</taxon>
        <taxon>Ecdysozoa</taxon>
        <taxon>Arthropoda</taxon>
        <taxon>Crustacea</taxon>
        <taxon>Multicrustacea</taxon>
        <taxon>Malacostraca</taxon>
        <taxon>Eumalacostraca</taxon>
        <taxon>Eucarida</taxon>
        <taxon>Decapoda</taxon>
        <taxon>Dendrobranchiata</taxon>
        <taxon>Penaeoidea</taxon>
        <taxon>Penaeidae</taxon>
        <taxon>Penaeus</taxon>
    </lineage>
</organism>
<sequence length="9" mass="1050">YAIAGRPRF</sequence>
<reference key="1">
    <citation type="journal article" date="2002" name="Peptides">
        <title>Four novel PYFs: members of NPY/PP peptide superfamily from the eyestalk of the giant tiger prawn Penaeus monodon.</title>
        <authorList>
            <person name="Sithigorngul P."/>
            <person name="Pupuem J."/>
            <person name="Krungkasem C."/>
            <person name="Longyant S."/>
            <person name="Panchan N."/>
            <person name="Chaivisuthangkura P."/>
            <person name="Sithigorngul W."/>
            <person name="Petsom A."/>
        </authorList>
    </citation>
    <scope>PROTEIN SEQUENCE</scope>
    <scope>TISSUE SPECIFICITY</scope>
    <scope>MASS SPECTROMETRY</scope>
    <source>
        <tissue>Eyestalk</tissue>
    </source>
</reference>
<feature type="peptide" id="PRO_0000044301" description="Peptide tyrosine phenylalanine 3">
    <location>
        <begin position="1"/>
        <end position="9"/>
    </location>
</feature>
<feature type="modified residue" description="Phenylalanine amide" evidence="1">
    <location>
        <position position="9"/>
    </location>
</feature>
<comment type="function">
    <text>May act as a neurotransmitter, neuromodulator or neurohormone.</text>
</comment>
<comment type="subcellular location">
    <subcellularLocation>
        <location>Secreted</location>
    </subcellularLocation>
</comment>
<comment type="tissue specificity">
    <text evidence="2">Limited to neuronal cell bodies, neuronal processes and sinus gland.</text>
</comment>
<comment type="mass spectrometry" mass="1050.0" method="MALDI" evidence="2"/>
<comment type="similarity">
    <text evidence="3">Belongs to the NPY family.</text>
</comment>
<dbReference type="GO" id="GO:0005576">
    <property type="term" value="C:extracellular region"/>
    <property type="evidence" value="ECO:0007669"/>
    <property type="project" value="UniProtKB-SubCell"/>
</dbReference>
<dbReference type="GO" id="GO:0007218">
    <property type="term" value="P:neuropeptide signaling pathway"/>
    <property type="evidence" value="ECO:0007669"/>
    <property type="project" value="UniProtKB-KW"/>
</dbReference>